<sequence length="363" mass="40052">MIIDTTEVQAINSFSRSESLKEAYGLIWLLVPIFTPVSGITIGVLVIVWLEREISAGIQQRIGPEYAGPLGILQALADGTKLLFKEDLLPSRGDTRLFSIGPSIAIISILLSYSVIPFGYRLVLADLSIGVFLWIAISSIAPIGLLMSGYGSNNKYSFSGGLRAAAQSISYEIPLTLCVLSISLLSNSLSTVDIVEAQSKYGFWGWNLWRQPIGFAVFLISSLAECERLPFDLPEAEEELVAGYQTEYSGIKFGLFYVASYLNLLVSSLFVTVLYLGGWNLSIPYIFIPELFEINKVSGVFGTTIGIFITLAKAYLFLFISITTRWTLPRMRMDQLLNLGWKFLLPISLGNLLLTTSSQLFSL</sequence>
<accession>Q09FZ1</accession>
<evidence type="ECO:0000255" key="1">
    <source>
        <dbReference type="HAMAP-Rule" id="MF_01350"/>
    </source>
</evidence>
<protein>
    <recommendedName>
        <fullName evidence="1">NAD(P)H-quinone oxidoreductase subunit 1, chloroplastic</fullName>
        <ecNumber evidence="1">7.1.1.-</ecNumber>
    </recommendedName>
    <alternativeName>
        <fullName evidence="1">NAD(P)H dehydrogenase subunit 1</fullName>
        <shortName evidence="1">NDH subunit 1</shortName>
    </alternativeName>
    <alternativeName>
        <fullName evidence="1">NADH-plastoquinone oxidoreductase subunit 1</fullName>
    </alternativeName>
</protein>
<organism>
    <name type="scientific">Platanus occidentalis</name>
    <name type="common">Sycamore</name>
    <name type="synonym">American plane tree</name>
    <dbReference type="NCBI Taxonomy" id="4403"/>
    <lineage>
        <taxon>Eukaryota</taxon>
        <taxon>Viridiplantae</taxon>
        <taxon>Streptophyta</taxon>
        <taxon>Embryophyta</taxon>
        <taxon>Tracheophyta</taxon>
        <taxon>Spermatophyta</taxon>
        <taxon>Magnoliopsida</taxon>
        <taxon>Proteales</taxon>
        <taxon>Platanaceae</taxon>
        <taxon>Platanus</taxon>
    </lineage>
</organism>
<proteinExistence type="inferred from homology"/>
<feature type="chain" id="PRO_0000298879" description="NAD(P)H-quinone oxidoreductase subunit 1, chloroplastic">
    <location>
        <begin position="1"/>
        <end position="363"/>
    </location>
</feature>
<feature type="transmembrane region" description="Helical" evidence="1">
    <location>
        <begin position="27"/>
        <end position="47"/>
    </location>
</feature>
<feature type="transmembrane region" description="Helical" evidence="1">
    <location>
        <begin position="98"/>
        <end position="118"/>
    </location>
</feature>
<feature type="transmembrane region" description="Helical" evidence="1">
    <location>
        <begin position="127"/>
        <end position="147"/>
    </location>
</feature>
<feature type="transmembrane region" description="Helical" evidence="1">
    <location>
        <begin position="248"/>
        <end position="268"/>
    </location>
</feature>
<feature type="transmembrane region" description="Helical" evidence="1">
    <location>
        <begin position="300"/>
        <end position="320"/>
    </location>
</feature>
<feature type="transmembrane region" description="Helical" evidence="1">
    <location>
        <begin position="336"/>
        <end position="356"/>
    </location>
</feature>
<name>NU1C_PLAOC</name>
<geneLocation type="chloroplast"/>
<gene>
    <name evidence="1" type="primary">ndhA</name>
</gene>
<keyword id="KW-0150">Chloroplast</keyword>
<keyword id="KW-0472">Membrane</keyword>
<keyword id="KW-0520">NAD</keyword>
<keyword id="KW-0521">NADP</keyword>
<keyword id="KW-0934">Plastid</keyword>
<keyword id="KW-0618">Plastoquinone</keyword>
<keyword id="KW-0874">Quinone</keyword>
<keyword id="KW-0793">Thylakoid</keyword>
<keyword id="KW-1278">Translocase</keyword>
<keyword id="KW-0812">Transmembrane</keyword>
<keyword id="KW-1133">Transmembrane helix</keyword>
<dbReference type="EC" id="7.1.1.-" evidence="1"/>
<dbReference type="EMBL" id="DQ923116">
    <property type="protein sequence ID" value="ABI49834.1"/>
    <property type="molecule type" value="Genomic_DNA"/>
</dbReference>
<dbReference type="RefSeq" id="YP_740620.1">
    <property type="nucleotide sequence ID" value="NC_008335.1"/>
</dbReference>
<dbReference type="SMR" id="Q09FZ1"/>
<dbReference type="GeneID" id="4271359"/>
<dbReference type="GO" id="GO:0009535">
    <property type="term" value="C:chloroplast thylakoid membrane"/>
    <property type="evidence" value="ECO:0007669"/>
    <property type="project" value="UniProtKB-SubCell"/>
</dbReference>
<dbReference type="GO" id="GO:0003954">
    <property type="term" value="F:NADH dehydrogenase activity"/>
    <property type="evidence" value="ECO:0007669"/>
    <property type="project" value="TreeGrafter"/>
</dbReference>
<dbReference type="GO" id="GO:0016655">
    <property type="term" value="F:oxidoreductase activity, acting on NAD(P)H, quinone or similar compound as acceptor"/>
    <property type="evidence" value="ECO:0007669"/>
    <property type="project" value="UniProtKB-UniRule"/>
</dbReference>
<dbReference type="GO" id="GO:0048038">
    <property type="term" value="F:quinone binding"/>
    <property type="evidence" value="ECO:0007669"/>
    <property type="project" value="UniProtKB-KW"/>
</dbReference>
<dbReference type="GO" id="GO:0009060">
    <property type="term" value="P:aerobic respiration"/>
    <property type="evidence" value="ECO:0007669"/>
    <property type="project" value="TreeGrafter"/>
</dbReference>
<dbReference type="GO" id="GO:0019684">
    <property type="term" value="P:photosynthesis, light reaction"/>
    <property type="evidence" value="ECO:0007669"/>
    <property type="project" value="UniProtKB-UniRule"/>
</dbReference>
<dbReference type="HAMAP" id="MF_01350">
    <property type="entry name" value="NDH1_NuoH"/>
    <property type="match status" value="1"/>
</dbReference>
<dbReference type="InterPro" id="IPR001694">
    <property type="entry name" value="NADH_UbQ_OxRdtase_su1/FPO"/>
</dbReference>
<dbReference type="InterPro" id="IPR018086">
    <property type="entry name" value="NADH_UbQ_OxRdtase_su1_CS"/>
</dbReference>
<dbReference type="NCBIfam" id="NF004741">
    <property type="entry name" value="PRK06076.1-2"/>
    <property type="match status" value="1"/>
</dbReference>
<dbReference type="PANTHER" id="PTHR11432">
    <property type="entry name" value="NADH DEHYDROGENASE SUBUNIT 1"/>
    <property type="match status" value="1"/>
</dbReference>
<dbReference type="PANTHER" id="PTHR11432:SF3">
    <property type="entry name" value="NADH-UBIQUINONE OXIDOREDUCTASE CHAIN 1"/>
    <property type="match status" value="1"/>
</dbReference>
<dbReference type="Pfam" id="PF00146">
    <property type="entry name" value="NADHdh"/>
    <property type="match status" value="1"/>
</dbReference>
<dbReference type="PROSITE" id="PS00667">
    <property type="entry name" value="COMPLEX1_ND1_1"/>
    <property type="match status" value="1"/>
</dbReference>
<dbReference type="PROSITE" id="PS00668">
    <property type="entry name" value="COMPLEX1_ND1_2"/>
    <property type="match status" value="1"/>
</dbReference>
<reference key="1">
    <citation type="journal article" date="2006" name="BMC Plant Biol.">
        <title>Rapid and accurate pyrosequencing of angiosperm plastid genomes.</title>
        <authorList>
            <person name="Moore M.J."/>
            <person name="Dhingra A."/>
            <person name="Soltis P.S."/>
            <person name="Shaw R."/>
            <person name="Farmerie W.G."/>
            <person name="Folta K.M."/>
            <person name="Soltis D.E."/>
        </authorList>
    </citation>
    <scope>NUCLEOTIDE SEQUENCE [LARGE SCALE GENOMIC DNA]</scope>
</reference>
<comment type="function">
    <text evidence="1">NDH shuttles electrons from NAD(P)H:plastoquinone, via FMN and iron-sulfur (Fe-S) centers, to quinones in the photosynthetic chain and possibly in a chloroplast respiratory chain. The immediate electron acceptor for the enzyme in this species is believed to be plastoquinone. Couples the redox reaction to proton translocation, and thus conserves the redox energy in a proton gradient.</text>
</comment>
<comment type="catalytic activity">
    <reaction evidence="1">
        <text>a plastoquinone + NADH + (n+1) H(+)(in) = a plastoquinol + NAD(+) + n H(+)(out)</text>
        <dbReference type="Rhea" id="RHEA:42608"/>
        <dbReference type="Rhea" id="RHEA-COMP:9561"/>
        <dbReference type="Rhea" id="RHEA-COMP:9562"/>
        <dbReference type="ChEBI" id="CHEBI:15378"/>
        <dbReference type="ChEBI" id="CHEBI:17757"/>
        <dbReference type="ChEBI" id="CHEBI:57540"/>
        <dbReference type="ChEBI" id="CHEBI:57945"/>
        <dbReference type="ChEBI" id="CHEBI:62192"/>
    </reaction>
</comment>
<comment type="catalytic activity">
    <reaction evidence="1">
        <text>a plastoquinone + NADPH + (n+1) H(+)(in) = a plastoquinol + NADP(+) + n H(+)(out)</text>
        <dbReference type="Rhea" id="RHEA:42612"/>
        <dbReference type="Rhea" id="RHEA-COMP:9561"/>
        <dbReference type="Rhea" id="RHEA-COMP:9562"/>
        <dbReference type="ChEBI" id="CHEBI:15378"/>
        <dbReference type="ChEBI" id="CHEBI:17757"/>
        <dbReference type="ChEBI" id="CHEBI:57783"/>
        <dbReference type="ChEBI" id="CHEBI:58349"/>
        <dbReference type="ChEBI" id="CHEBI:62192"/>
    </reaction>
</comment>
<comment type="subunit">
    <text evidence="1">NDH is composed of at least 16 different subunits, 5 of which are encoded in the nucleus.</text>
</comment>
<comment type="subcellular location">
    <subcellularLocation>
        <location evidence="1">Plastid</location>
        <location evidence="1">Chloroplast thylakoid membrane</location>
        <topology evidence="1">Multi-pass membrane protein</topology>
    </subcellularLocation>
</comment>
<comment type="similarity">
    <text evidence="1">Belongs to the complex I subunit 1 family.</text>
</comment>